<organism>
    <name type="scientific">Arabidopsis thaliana</name>
    <name type="common">Mouse-ear cress</name>
    <dbReference type="NCBI Taxonomy" id="3702"/>
    <lineage>
        <taxon>Eukaryota</taxon>
        <taxon>Viridiplantae</taxon>
        <taxon>Streptophyta</taxon>
        <taxon>Embryophyta</taxon>
        <taxon>Tracheophyta</taxon>
        <taxon>Spermatophyta</taxon>
        <taxon>Magnoliopsida</taxon>
        <taxon>eudicotyledons</taxon>
        <taxon>Gunneridae</taxon>
        <taxon>Pentapetalae</taxon>
        <taxon>rosids</taxon>
        <taxon>malvids</taxon>
        <taxon>Brassicales</taxon>
        <taxon>Brassicaceae</taxon>
        <taxon>Camelineae</taxon>
        <taxon>Arabidopsis</taxon>
    </lineage>
</organism>
<proteinExistence type="evidence at transcript level"/>
<sequence>MKFMKLGTKPDSFLSKGDNVRYVTNELETEIIIIIGNVKFYLHKFPLLSKSGFLQKHIATSKNEEEKKNQIDEIDISEIPGGSVAFEICVKFCYGITVTLNAYNVVAVRCAAEFLEMNETFEKSNLVYKIDVFLNSTIFRSWKDSIIVLQTTKDLLSDDSEELVKRCLGSIASTASIDTSKVKWSYTYNRKKKLEKVRKPEDGVPKDWWVEDLCELHIDLYKQAIKAIKNRGKVPSNVIGEALHAYAIRRIAGFSKESMQLIDRSLINTIIELLPDEKGNISSSFLTKLHRASIFLGCEETVKEKLKKRVSEQLEETTVNDILMYDLDMVQSLVKEFMNRDPKTHSKVSVAKLIDGYLAEKSRDPNLPLQNFLSLAETLSSFPRHSHDVLYRAIDMFLKEHSGISKSEKKRVCGLMDCRKLSAEACEHAVQNERLPMRVIVQVLFFEQIRANGSSTGYSTPELTTTTLNTEDDEWDHEKEF</sequence>
<accession>O64814</accession>
<reference key="1">
    <citation type="journal article" date="1999" name="Nature">
        <title>Sequence and analysis of chromosome 2 of the plant Arabidopsis thaliana.</title>
        <authorList>
            <person name="Lin X."/>
            <person name="Kaul S."/>
            <person name="Rounsley S.D."/>
            <person name="Shea T.P."/>
            <person name="Benito M.-I."/>
            <person name="Town C.D."/>
            <person name="Fujii C.Y."/>
            <person name="Mason T.M."/>
            <person name="Bowman C.L."/>
            <person name="Barnstead M.E."/>
            <person name="Feldblyum T.V."/>
            <person name="Buell C.R."/>
            <person name="Ketchum K.A."/>
            <person name="Lee J.J."/>
            <person name="Ronning C.M."/>
            <person name="Koo H.L."/>
            <person name="Moffat K.S."/>
            <person name="Cronin L.A."/>
            <person name="Shen M."/>
            <person name="Pai G."/>
            <person name="Van Aken S."/>
            <person name="Umayam L."/>
            <person name="Tallon L.J."/>
            <person name="Gill J.E."/>
            <person name="Adams M.D."/>
            <person name="Carrera A.J."/>
            <person name="Creasy T.H."/>
            <person name="Goodman H.M."/>
            <person name="Somerville C.R."/>
            <person name="Copenhaver G.P."/>
            <person name="Preuss D."/>
            <person name="Nierman W.C."/>
            <person name="White O."/>
            <person name="Eisen J.A."/>
            <person name="Salzberg S.L."/>
            <person name="Fraser C.M."/>
            <person name="Venter J.C."/>
        </authorList>
    </citation>
    <scope>NUCLEOTIDE SEQUENCE [LARGE SCALE GENOMIC DNA]</scope>
    <source>
        <strain>cv. Columbia</strain>
    </source>
</reference>
<reference key="2">
    <citation type="journal article" date="2017" name="Plant J.">
        <title>Araport11: a complete reannotation of the Arabidopsis thaliana reference genome.</title>
        <authorList>
            <person name="Cheng C.Y."/>
            <person name="Krishnakumar V."/>
            <person name="Chan A.P."/>
            <person name="Thibaud-Nissen F."/>
            <person name="Schobel S."/>
            <person name="Town C.D."/>
        </authorList>
    </citation>
    <scope>GENOME REANNOTATION</scope>
    <source>
        <strain>cv. Columbia</strain>
    </source>
</reference>
<reference key="3">
    <citation type="journal article" date="2002" name="Plant Physiol.">
        <title>Cloning and sequencing of cDNAs for hypothetical genes from chromosome 2 of Arabidopsis.</title>
        <authorList>
            <person name="Xiao Y.-L."/>
            <person name="Malik M."/>
            <person name="Whitelaw C.A."/>
            <person name="Town C.D."/>
        </authorList>
    </citation>
    <scope>NUCLEOTIDE SEQUENCE [LARGE SCALE MRNA]</scope>
    <source>
        <strain>cv. Columbia</strain>
    </source>
</reference>
<reference key="4">
    <citation type="journal article" date="2002" name="Science">
        <title>Functional annotation of a full-length Arabidopsis cDNA collection.</title>
        <authorList>
            <person name="Seki M."/>
            <person name="Narusaka M."/>
            <person name="Kamiya A."/>
            <person name="Ishida J."/>
            <person name="Satou M."/>
            <person name="Sakurai T."/>
            <person name="Nakajima M."/>
            <person name="Enju A."/>
            <person name="Akiyama K."/>
            <person name="Oono Y."/>
            <person name="Muramatsu M."/>
            <person name="Hayashizaki Y."/>
            <person name="Kawai J."/>
            <person name="Carninci P."/>
            <person name="Itoh M."/>
            <person name="Ishii Y."/>
            <person name="Arakawa T."/>
            <person name="Shibata K."/>
            <person name="Shinagawa A."/>
            <person name="Shinozaki K."/>
        </authorList>
    </citation>
    <scope>NUCLEOTIDE SEQUENCE [LARGE SCALE MRNA]</scope>
    <source>
        <strain>cv. Columbia</strain>
    </source>
</reference>
<reference key="5">
    <citation type="journal article" date="2003" name="Science">
        <title>Empirical analysis of transcriptional activity in the Arabidopsis genome.</title>
        <authorList>
            <person name="Yamada K."/>
            <person name="Lim J."/>
            <person name="Dale J.M."/>
            <person name="Chen H."/>
            <person name="Shinn P."/>
            <person name="Palm C.J."/>
            <person name="Southwick A.M."/>
            <person name="Wu H.C."/>
            <person name="Kim C.J."/>
            <person name="Nguyen M."/>
            <person name="Pham P.K."/>
            <person name="Cheuk R.F."/>
            <person name="Karlin-Newmann G."/>
            <person name="Liu S.X."/>
            <person name="Lam B."/>
            <person name="Sakano H."/>
            <person name="Wu T."/>
            <person name="Yu G."/>
            <person name="Miranda M."/>
            <person name="Quach H.L."/>
            <person name="Tripp M."/>
            <person name="Chang C.H."/>
            <person name="Lee J.M."/>
            <person name="Toriumi M.J."/>
            <person name="Chan M.M."/>
            <person name="Tang C.C."/>
            <person name="Onodera C.S."/>
            <person name="Deng J.M."/>
            <person name="Akiyama K."/>
            <person name="Ansari Y."/>
            <person name="Arakawa T."/>
            <person name="Banh J."/>
            <person name="Banno F."/>
            <person name="Bowser L."/>
            <person name="Brooks S.Y."/>
            <person name="Carninci P."/>
            <person name="Chao Q."/>
            <person name="Choy N."/>
            <person name="Enju A."/>
            <person name="Goldsmith A.D."/>
            <person name="Gurjal M."/>
            <person name="Hansen N.F."/>
            <person name="Hayashizaki Y."/>
            <person name="Johnson-Hopson C."/>
            <person name="Hsuan V.W."/>
            <person name="Iida K."/>
            <person name="Karnes M."/>
            <person name="Khan S."/>
            <person name="Koesema E."/>
            <person name="Ishida J."/>
            <person name="Jiang P.X."/>
            <person name="Jones T."/>
            <person name="Kawai J."/>
            <person name="Kamiya A."/>
            <person name="Meyers C."/>
            <person name="Nakajima M."/>
            <person name="Narusaka M."/>
            <person name="Seki M."/>
            <person name="Sakurai T."/>
            <person name="Satou M."/>
            <person name="Tamse R."/>
            <person name="Vaysberg M."/>
            <person name="Wallender E.K."/>
            <person name="Wong C."/>
            <person name="Yamamura Y."/>
            <person name="Yuan S."/>
            <person name="Shinozaki K."/>
            <person name="Davis R.W."/>
            <person name="Theologis A."/>
            <person name="Ecker J.R."/>
        </authorList>
    </citation>
    <scope>NUCLEOTIDE SEQUENCE [LARGE SCALE MRNA]</scope>
    <source>
        <strain>cv. Columbia</strain>
    </source>
</reference>
<reference key="6">
    <citation type="journal article" date="2005" name="Plant Physiol.">
        <title>Analysis of the cDNAs of hypothetical genes on Arabidopsis chromosome 2 reveals numerous transcript variants.</title>
        <authorList>
            <person name="Xiao Y.-L."/>
            <person name="Smith S.R."/>
            <person name="Ishmael N."/>
            <person name="Redman J.C."/>
            <person name="Kumar N."/>
            <person name="Monaghan E.L."/>
            <person name="Ayele M."/>
            <person name="Haas B.J."/>
            <person name="Wu H.C."/>
            <person name="Town C.D."/>
        </authorList>
    </citation>
    <scope>NUCLEOTIDE SEQUENCE [LARGE SCALE MRNA]</scope>
    <source>
        <strain>cv. Columbia</strain>
    </source>
</reference>
<reference key="7">
    <citation type="journal article" date="2005" name="J. Biol. Chem.">
        <title>Cullins 3a and 3b assemble with members of the broad complex/tramtrack/bric-a-brac (BTB) protein family to form essential ubiquitin-protein ligases (E3s) in Arabidopsis.</title>
        <authorList>
            <person name="Gingerich D.J."/>
            <person name="Gagne J.M."/>
            <person name="Salter D.W."/>
            <person name="Hellmann H."/>
            <person name="Estelle M."/>
            <person name="Ma L."/>
            <person name="Vierstra R.D."/>
        </authorList>
    </citation>
    <scope>DOMAIN BTB</scope>
</reference>
<reference key="8">
    <citation type="journal article" date="2008" name="Proc. Natl. Acad. Sci. U.S.A.">
        <title>NPY genes and AGC kinases define two key steps in auxin-mediated organogenesis in Arabidopsis.</title>
        <authorList>
            <person name="Cheng Y."/>
            <person name="Qin G."/>
            <person name="Dai X."/>
            <person name="Zhao Y."/>
        </authorList>
    </citation>
    <scope>FUNCTION</scope>
    <scope>TISSUE SPECIFICITY</scope>
    <scope>GENE FAMILY</scope>
    <scope>NOMENCLATURE</scope>
</reference>
<reference key="9">
    <citation type="journal article" date="2011" name="Development">
        <title>Polar-localized NPH3-like proteins regulate polarity and endocytosis of PIN-FORMED auxin efflux carriers.</title>
        <authorList>
            <person name="Furutani M."/>
            <person name="Sakamoto N."/>
            <person name="Yoshida S."/>
            <person name="Kajiwara T."/>
            <person name="Robert H.S."/>
            <person name="Friml J."/>
            <person name="Tasaka M."/>
        </authorList>
    </citation>
    <scope>FUNCTION</scope>
    <scope>DISRUPTION PHENOTYPE</scope>
    <scope>SUBCELLULAR LOCATION</scope>
    <scope>TISSUE SPECIFICITY</scope>
    <scope>GENE FAMILY</scope>
    <source>
        <strain>cv. Columbia</strain>
    </source>
</reference>
<reference key="10">
    <citation type="journal article" date="2011" name="Mol. Plant">
        <title>NPY genes play an essential role in root gravitropic responses in Arabidopsis.</title>
        <authorList>
            <person name="Li Y."/>
            <person name="Dai X."/>
            <person name="Cheng Y."/>
            <person name="Zhao Y."/>
        </authorList>
    </citation>
    <scope>FUNCTION</scope>
    <scope>TISSUE SPECIFICITY</scope>
    <scope>GENE FAMILY</scope>
    <scope>NOMENCLATURE</scope>
</reference>
<reference key="11">
    <citation type="journal article" date="2021" name="Curr. Biol.">
        <title>AGC kinases and MAB4/MEL proteins maintain PIN polarity by limiting lateral diffusion in plant cells.</title>
        <authorList>
            <person name="Glanc M."/>
            <person name="Van Gelderen K."/>
            <person name="Hoermayer L."/>
            <person name="Tan S."/>
            <person name="Naramoto S."/>
            <person name="Zhang X."/>
            <person name="Domjan D."/>
            <person name="Vcelarova L."/>
            <person name="Hauschild R."/>
            <person name="Johnson A."/>
            <person name="de Koning E."/>
            <person name="van Dop M."/>
            <person name="Rademacher E."/>
            <person name="Janson S."/>
            <person name="Wei X."/>
            <person name="Molnar G."/>
            <person name="Fendrych M."/>
            <person name="De Rybel B."/>
            <person name="Offringa R."/>
            <person name="Friml J."/>
        </authorList>
    </citation>
    <scope>FUNCTION</scope>
    <scope>DISRUPTION PHENOTYPE</scope>
    <source>
        <strain>cv. Columbia</strain>
    </source>
</reference>
<protein>
    <recommendedName>
        <fullName evidence="14 15">Phototropic-responsive NPH3 family protein NPY4</fullName>
    </recommendedName>
    <alternativeName>
        <fullName evidence="13">MAB4/ENP/NPY1-like proten 4</fullName>
    </alternativeName>
    <alternativeName>
        <fullName evidence="11 12">Protein NAKED PINS IN YUC MUTANTS 4</fullName>
    </alternativeName>
</protein>
<gene>
    <name evidence="11 12" type="primary">NPY4</name>
    <name evidence="13" type="synonym">MEL4</name>
    <name evidence="16" type="ordered locus">At2g23050</name>
    <name evidence="17" type="ORF">F21P24.11</name>
</gene>
<feature type="chain" id="PRO_0000409566" description="Phototropic-responsive NPH3 family protein NPY4">
    <location>
        <begin position="1"/>
        <end position="481"/>
    </location>
</feature>
<feature type="domain" description="BTB" evidence="3">
    <location>
        <begin position="29"/>
        <end position="102"/>
    </location>
</feature>
<feature type="domain" description="NPH3" evidence="4">
    <location>
        <begin position="207"/>
        <end position="450"/>
    </location>
</feature>
<feature type="region of interest" description="Disordered" evidence="5">
    <location>
        <begin position="456"/>
        <end position="481"/>
    </location>
</feature>
<feature type="compositionally biased region" description="Low complexity" evidence="5">
    <location>
        <begin position="460"/>
        <end position="469"/>
    </location>
</feature>
<feature type="modified residue" description="Phosphotyrosine" evidence="2">
    <location>
        <position position="391"/>
    </location>
</feature>
<evidence type="ECO:0000250" key="1">
    <source>
        <dbReference type="UniProtKB" id="Q66GP0"/>
    </source>
</evidence>
<evidence type="ECO:0000250" key="2">
    <source>
        <dbReference type="UniProtKB" id="Q9FMF5"/>
    </source>
</evidence>
<evidence type="ECO:0000255" key="3">
    <source>
        <dbReference type="PROSITE-ProRule" id="PRU00037"/>
    </source>
</evidence>
<evidence type="ECO:0000255" key="4">
    <source>
        <dbReference type="PROSITE-ProRule" id="PRU00982"/>
    </source>
</evidence>
<evidence type="ECO:0000256" key="5">
    <source>
        <dbReference type="SAM" id="MobiDB-lite"/>
    </source>
</evidence>
<evidence type="ECO:0000269" key="6">
    <source>
    </source>
</evidence>
<evidence type="ECO:0000269" key="7">
    <source>
    </source>
</evidence>
<evidence type="ECO:0000269" key="8">
    <source>
    </source>
</evidence>
<evidence type="ECO:0000269" key="9">
    <source>
    </source>
</evidence>
<evidence type="ECO:0000269" key="10">
    <source>
    </source>
</evidence>
<evidence type="ECO:0000303" key="11">
    <source>
    </source>
</evidence>
<evidence type="ECO:0000303" key="12">
    <source>
    </source>
</evidence>
<evidence type="ECO:0000303" key="13">
    <source>
    </source>
</evidence>
<evidence type="ECO:0000305" key="14">
    <source>
    </source>
</evidence>
<evidence type="ECO:0000305" key="15">
    <source>
    </source>
</evidence>
<evidence type="ECO:0000312" key="16">
    <source>
        <dbReference type="Araport" id="AT2G23050"/>
    </source>
</evidence>
<evidence type="ECO:0000312" key="17">
    <source>
        <dbReference type="EMBL" id="AAC17821.1"/>
    </source>
</evidence>
<name>NPY4_ARATH</name>
<comment type="function">
    <text evidence="1 7 8 9 10">May act as a substrate-specific adapter of an E3 ubiquitin-protein ligase complex (CUL3-RBX1-BTB) which mediates the ubiquitination and subsequent proteasomal degradation of target proteins (By similarity). Plays an essential role in auxin-mediated organogenesis and in root gravitropic responses through the control of PIN proteins (e.g. PIN1 and PIN2) polarity in the root tip endodermal cell layer and in shoot epidermis (PubMed:19075219, PubMed:20833732, PubMed:21490067). Recruited to the plasma membrane by PINs (e.g. PIN1 and PIN2) and, in concert with AGC kinases-mediated (e.g. D6PK and PID) PINs phosphorylation, maintains their polarity through limiting lateral diffusion-based escape (PubMed:33705718).</text>
</comment>
<comment type="pathway">
    <text evidence="1">Protein modification; protein ubiquitination.</text>
</comment>
<comment type="subcellular location">
    <subcellularLocation>
        <location evidence="9">Cell membrane</location>
    </subcellularLocation>
    <subcellularLocation>
        <location evidence="9">Cytoplasm</location>
        <location evidence="9">Cytosol</location>
    </subcellularLocation>
    <text evidence="9">Polar localization at the cell periphery almost identical to PIN proteins polarity, in the upper side of the plasma membrane towards the tips of cotyledon primordia in the protodermal cells and in root epidermis, and in the basal side of provascular cells, root stele, pericycle, endodermis and cortex, and in radicle tip cells (PubMed:21490067). Weakly observed in the cytosol of root tip quiescent center (QC) and columella cells, sometimes close to the basal side of the plasma membrane (PubMed:21490067).</text>
</comment>
<comment type="tissue specificity">
    <text evidence="7 8 9">Expressed in the hypocotyl cells that would differentiate into vascular bundles (PubMed:19075219, PubMed:20833732). Highly expressed in primary root tips and radicles (PubMed:19075219, PubMed:20833732, PubMed:21490067).</text>
</comment>
<comment type="domain">
    <text evidence="6">The BTB/POZ domain mediates the interaction with some component of ubiquitin ligase complexes.</text>
</comment>
<comment type="disruption phenotype">
    <text evidence="9">Plants lacking NPY2/MEL3, NPY3/MEL2, NPY4/MEL4 and NPY5/MEL1 exhibit severe reduction in PIN proteins (e.g. PIN1 and PIN2) abundance which are less phosphorylated and lacking polar localization in the root endodermal cell layer and in shoot epidermis due to increased clathrin-dependent internalization from the plasma membrane; this leads to defective expression of auxin responsive genes, defects in cotyledons and floral organs formation, as well as impaired root gravitropic responses.</text>
</comment>
<comment type="similarity">
    <text evidence="4">Belongs to the NPH3 family.</text>
</comment>
<keyword id="KW-1003">Cell membrane</keyword>
<keyword id="KW-0963">Cytoplasm</keyword>
<keyword id="KW-0472">Membrane</keyword>
<keyword id="KW-0597">Phosphoprotein</keyword>
<keyword id="KW-1185">Reference proteome</keyword>
<keyword id="KW-0833">Ubl conjugation pathway</keyword>
<dbReference type="EMBL" id="AC004401">
    <property type="protein sequence ID" value="AAC17821.1"/>
    <property type="molecule type" value="Genomic_DNA"/>
</dbReference>
<dbReference type="EMBL" id="CP002685">
    <property type="protein sequence ID" value="AEC07400.1"/>
    <property type="molecule type" value="Genomic_DNA"/>
</dbReference>
<dbReference type="EMBL" id="AY102541">
    <property type="protein sequence ID" value="AAM76746.1"/>
    <property type="molecule type" value="mRNA"/>
</dbReference>
<dbReference type="EMBL" id="AK117486">
    <property type="protein sequence ID" value="BAC42149.1"/>
    <property type="molecule type" value="mRNA"/>
</dbReference>
<dbReference type="EMBL" id="BT005613">
    <property type="protein sequence ID" value="AAO64033.1"/>
    <property type="molecule type" value="mRNA"/>
</dbReference>
<dbReference type="EMBL" id="AY954795">
    <property type="protein sequence ID" value="AAX55121.1"/>
    <property type="molecule type" value="mRNA"/>
</dbReference>
<dbReference type="PIR" id="H84619">
    <property type="entry name" value="H84619"/>
</dbReference>
<dbReference type="RefSeq" id="NP_179887.1">
    <property type="nucleotide sequence ID" value="NM_127869.3"/>
</dbReference>
<dbReference type="SMR" id="O64814"/>
<dbReference type="BioGRID" id="2188">
    <property type="interactions" value="1"/>
</dbReference>
<dbReference type="IntAct" id="O64814">
    <property type="interactions" value="1"/>
</dbReference>
<dbReference type="STRING" id="3702.O64814"/>
<dbReference type="PaxDb" id="3702-AT2G23050.1"/>
<dbReference type="ProteomicsDB" id="251073"/>
<dbReference type="EnsemblPlants" id="AT2G23050.1">
    <property type="protein sequence ID" value="AT2G23050.1"/>
    <property type="gene ID" value="AT2G23050"/>
</dbReference>
<dbReference type="GeneID" id="816835"/>
<dbReference type="Gramene" id="AT2G23050.1">
    <property type="protein sequence ID" value="AT2G23050.1"/>
    <property type="gene ID" value="AT2G23050"/>
</dbReference>
<dbReference type="KEGG" id="ath:AT2G23050"/>
<dbReference type="Araport" id="AT2G23050"/>
<dbReference type="TAIR" id="AT2G23050">
    <property type="gene designation" value="NPY4"/>
</dbReference>
<dbReference type="eggNOG" id="ENOG502QSYM">
    <property type="taxonomic scope" value="Eukaryota"/>
</dbReference>
<dbReference type="HOGENOM" id="CLU_005994_5_2_1"/>
<dbReference type="InParanoid" id="O64814"/>
<dbReference type="OMA" id="NSFRSMS"/>
<dbReference type="PhylomeDB" id="O64814"/>
<dbReference type="UniPathway" id="UPA00143"/>
<dbReference type="PRO" id="PR:O64814"/>
<dbReference type="Proteomes" id="UP000006548">
    <property type="component" value="Chromosome 2"/>
</dbReference>
<dbReference type="ExpressionAtlas" id="O64814">
    <property type="expression patterns" value="baseline and differential"/>
</dbReference>
<dbReference type="GO" id="GO:0071944">
    <property type="term" value="C:cell periphery"/>
    <property type="evidence" value="ECO:0000314"/>
    <property type="project" value="TAIR"/>
</dbReference>
<dbReference type="GO" id="GO:0005829">
    <property type="term" value="C:cytosol"/>
    <property type="evidence" value="ECO:0000314"/>
    <property type="project" value="UniProtKB"/>
</dbReference>
<dbReference type="GO" id="GO:0005886">
    <property type="term" value="C:plasma membrane"/>
    <property type="evidence" value="ECO:0000314"/>
    <property type="project" value="UniProtKB"/>
</dbReference>
<dbReference type="GO" id="GO:0009958">
    <property type="term" value="P:positive gravitropism"/>
    <property type="evidence" value="ECO:0000316"/>
    <property type="project" value="UniProtKB"/>
</dbReference>
<dbReference type="GO" id="GO:0016567">
    <property type="term" value="P:protein ubiquitination"/>
    <property type="evidence" value="ECO:0007669"/>
    <property type="project" value="UniProtKB-UniPathway"/>
</dbReference>
<dbReference type="FunFam" id="3.30.710.10:FF:000173">
    <property type="entry name" value="BTB/POZ domain-containing protein NPY2"/>
    <property type="match status" value="1"/>
</dbReference>
<dbReference type="Gene3D" id="3.30.710.10">
    <property type="entry name" value="Potassium Channel Kv1.1, Chain A"/>
    <property type="match status" value="1"/>
</dbReference>
<dbReference type="InterPro" id="IPR000210">
    <property type="entry name" value="BTB/POZ_dom"/>
</dbReference>
<dbReference type="InterPro" id="IPR043454">
    <property type="entry name" value="NPH3/RPT2-like"/>
</dbReference>
<dbReference type="InterPro" id="IPR027356">
    <property type="entry name" value="NPH3_dom"/>
</dbReference>
<dbReference type="InterPro" id="IPR011333">
    <property type="entry name" value="SKP1/BTB/POZ_sf"/>
</dbReference>
<dbReference type="PANTHER" id="PTHR32370">
    <property type="entry name" value="OS12G0117600 PROTEIN"/>
    <property type="match status" value="1"/>
</dbReference>
<dbReference type="Pfam" id="PF00651">
    <property type="entry name" value="BTB"/>
    <property type="match status" value="1"/>
</dbReference>
<dbReference type="Pfam" id="PF03000">
    <property type="entry name" value="NPH3"/>
    <property type="match status" value="1"/>
</dbReference>
<dbReference type="SUPFAM" id="SSF54695">
    <property type="entry name" value="POZ domain"/>
    <property type="match status" value="1"/>
</dbReference>
<dbReference type="PROSITE" id="PS50097">
    <property type="entry name" value="BTB"/>
    <property type="match status" value="1"/>
</dbReference>
<dbReference type="PROSITE" id="PS51649">
    <property type="entry name" value="NPH3"/>
    <property type="match status" value="1"/>
</dbReference>